<protein>
    <recommendedName>
        <fullName>Superoxide dismutase [Mn]</fullName>
        <ecNumber>1.15.1.1</ecNumber>
    </recommendedName>
    <alternativeName>
        <fullName>MnSOD</fullName>
    </alternativeName>
</protein>
<keyword id="KW-0464">Manganese</keyword>
<keyword id="KW-0479">Metal-binding</keyword>
<keyword id="KW-0560">Oxidoreductase</keyword>
<keyword id="KW-1185">Reference proteome</keyword>
<proteinExistence type="inferred from homology"/>
<evidence type="ECO:0000250" key="1"/>
<evidence type="ECO:0000305" key="2"/>
<comment type="function">
    <text>Destroys superoxide anion radicals which are normally produced within the cells and which are toxic to biological systems.</text>
</comment>
<comment type="catalytic activity">
    <reaction>
        <text>2 superoxide + 2 H(+) = H2O2 + O2</text>
        <dbReference type="Rhea" id="RHEA:20696"/>
        <dbReference type="ChEBI" id="CHEBI:15378"/>
        <dbReference type="ChEBI" id="CHEBI:15379"/>
        <dbReference type="ChEBI" id="CHEBI:16240"/>
        <dbReference type="ChEBI" id="CHEBI:18421"/>
        <dbReference type="EC" id="1.15.1.1"/>
    </reaction>
</comment>
<comment type="cofactor">
    <cofactor evidence="1">
        <name>Mn(2+)</name>
        <dbReference type="ChEBI" id="CHEBI:29035"/>
    </cofactor>
    <text evidence="1">Binds 1 Mn(2+) ion per subunit.</text>
</comment>
<comment type="subunit">
    <text evidence="1">Homodimer.</text>
</comment>
<comment type="similarity">
    <text evidence="2">Belongs to the iron/manganese superoxide dismutase family.</text>
</comment>
<organism>
    <name type="scientific">Escherichia coli O157:H7</name>
    <dbReference type="NCBI Taxonomy" id="83334"/>
    <lineage>
        <taxon>Bacteria</taxon>
        <taxon>Pseudomonadati</taxon>
        <taxon>Pseudomonadota</taxon>
        <taxon>Gammaproteobacteria</taxon>
        <taxon>Enterobacterales</taxon>
        <taxon>Enterobacteriaceae</taxon>
        <taxon>Escherichia</taxon>
    </lineage>
</organism>
<dbReference type="EC" id="1.15.1.1"/>
<dbReference type="EMBL" id="AE005174">
    <property type="protein sequence ID" value="AAG59102.1"/>
    <property type="molecule type" value="Genomic_DNA"/>
</dbReference>
<dbReference type="EMBL" id="BA000007">
    <property type="protein sequence ID" value="BAB38257.1"/>
    <property type="molecule type" value="Genomic_DNA"/>
</dbReference>
<dbReference type="PIR" id="B86080">
    <property type="entry name" value="B86080"/>
</dbReference>
<dbReference type="PIR" id="B91233">
    <property type="entry name" value="B91233"/>
</dbReference>
<dbReference type="RefSeq" id="NP_312861.3">
    <property type="nucleotide sequence ID" value="NC_002695.1"/>
</dbReference>
<dbReference type="RefSeq" id="WP_001297064.1">
    <property type="nucleotide sequence ID" value="NZ_VOAI01000016.1"/>
</dbReference>
<dbReference type="SMR" id="P66828"/>
<dbReference type="STRING" id="155864.Z5453"/>
<dbReference type="GeneID" id="916147"/>
<dbReference type="GeneID" id="93778030"/>
<dbReference type="KEGG" id="ece:Z5453"/>
<dbReference type="KEGG" id="ecs:ECs_4834"/>
<dbReference type="PATRIC" id="fig|386585.9.peg.5054"/>
<dbReference type="eggNOG" id="COG0605">
    <property type="taxonomic scope" value="Bacteria"/>
</dbReference>
<dbReference type="HOGENOM" id="CLU_031625_0_1_6"/>
<dbReference type="OMA" id="GSYEGWK"/>
<dbReference type="Proteomes" id="UP000000558">
    <property type="component" value="Chromosome"/>
</dbReference>
<dbReference type="Proteomes" id="UP000002519">
    <property type="component" value="Chromosome"/>
</dbReference>
<dbReference type="GO" id="GO:0005737">
    <property type="term" value="C:cytoplasm"/>
    <property type="evidence" value="ECO:0007669"/>
    <property type="project" value="TreeGrafter"/>
</dbReference>
<dbReference type="GO" id="GO:0046872">
    <property type="term" value="F:metal ion binding"/>
    <property type="evidence" value="ECO:0007669"/>
    <property type="project" value="UniProtKB-KW"/>
</dbReference>
<dbReference type="GO" id="GO:0004784">
    <property type="term" value="F:superoxide dismutase activity"/>
    <property type="evidence" value="ECO:0007669"/>
    <property type="project" value="UniProtKB-EC"/>
</dbReference>
<dbReference type="FunFam" id="1.10.287.990:FF:000001">
    <property type="entry name" value="Superoxide dismutase"/>
    <property type="match status" value="1"/>
</dbReference>
<dbReference type="FunFam" id="3.55.40.20:FF:000001">
    <property type="entry name" value="Superoxide dismutase"/>
    <property type="match status" value="1"/>
</dbReference>
<dbReference type="Gene3D" id="1.10.287.990">
    <property type="entry name" value="Fe,Mn superoxide dismutase (SOD) domain"/>
    <property type="match status" value="1"/>
</dbReference>
<dbReference type="Gene3D" id="3.55.40.20">
    <property type="entry name" value="Iron/manganese superoxide dismutase, C-terminal domain"/>
    <property type="match status" value="1"/>
</dbReference>
<dbReference type="InterPro" id="IPR001189">
    <property type="entry name" value="Mn/Fe_SOD"/>
</dbReference>
<dbReference type="InterPro" id="IPR019833">
    <property type="entry name" value="Mn/Fe_SOD_BS"/>
</dbReference>
<dbReference type="InterPro" id="IPR019832">
    <property type="entry name" value="Mn/Fe_SOD_C"/>
</dbReference>
<dbReference type="InterPro" id="IPR019831">
    <property type="entry name" value="Mn/Fe_SOD_N"/>
</dbReference>
<dbReference type="InterPro" id="IPR036324">
    <property type="entry name" value="Mn/Fe_SOD_N_sf"/>
</dbReference>
<dbReference type="InterPro" id="IPR036314">
    <property type="entry name" value="SOD_C_sf"/>
</dbReference>
<dbReference type="NCBIfam" id="NF008177">
    <property type="entry name" value="PRK10925.1"/>
    <property type="match status" value="1"/>
</dbReference>
<dbReference type="PANTHER" id="PTHR43595">
    <property type="entry name" value="37S RIBOSOMAL PROTEIN S26, MITOCHONDRIAL"/>
    <property type="match status" value="1"/>
</dbReference>
<dbReference type="PANTHER" id="PTHR43595:SF2">
    <property type="entry name" value="SMALL RIBOSOMAL SUBUNIT PROTEIN MS42"/>
    <property type="match status" value="1"/>
</dbReference>
<dbReference type="Pfam" id="PF02777">
    <property type="entry name" value="Sod_Fe_C"/>
    <property type="match status" value="1"/>
</dbReference>
<dbReference type="Pfam" id="PF00081">
    <property type="entry name" value="Sod_Fe_N"/>
    <property type="match status" value="1"/>
</dbReference>
<dbReference type="PIRSF" id="PIRSF000349">
    <property type="entry name" value="SODismutase"/>
    <property type="match status" value="1"/>
</dbReference>
<dbReference type="PRINTS" id="PR01703">
    <property type="entry name" value="MNSODISMTASE"/>
</dbReference>
<dbReference type="SUPFAM" id="SSF54719">
    <property type="entry name" value="Fe,Mn superoxide dismutase (SOD), C-terminal domain"/>
    <property type="match status" value="1"/>
</dbReference>
<dbReference type="SUPFAM" id="SSF46609">
    <property type="entry name" value="Fe,Mn superoxide dismutase (SOD), N-terminal domain"/>
    <property type="match status" value="1"/>
</dbReference>
<dbReference type="PROSITE" id="PS00088">
    <property type="entry name" value="SOD_MN"/>
    <property type="match status" value="1"/>
</dbReference>
<feature type="initiator methionine" description="Removed" evidence="1">
    <location>
        <position position="1"/>
    </location>
</feature>
<feature type="chain" id="PRO_0000160031" description="Superoxide dismutase [Mn]">
    <location>
        <begin position="2"/>
        <end position="206"/>
    </location>
</feature>
<feature type="binding site" evidence="1">
    <location>
        <position position="27"/>
    </location>
    <ligand>
        <name>Mn(2+)</name>
        <dbReference type="ChEBI" id="CHEBI:29035"/>
    </ligand>
</feature>
<feature type="binding site" evidence="1">
    <location>
        <position position="82"/>
    </location>
    <ligand>
        <name>Mn(2+)</name>
        <dbReference type="ChEBI" id="CHEBI:29035"/>
    </ligand>
</feature>
<feature type="binding site" evidence="1">
    <location>
        <position position="168"/>
    </location>
    <ligand>
        <name>Mn(2+)</name>
        <dbReference type="ChEBI" id="CHEBI:29035"/>
    </ligand>
</feature>
<feature type="binding site" evidence="1">
    <location>
        <position position="172"/>
    </location>
    <ligand>
        <name>Mn(2+)</name>
        <dbReference type="ChEBI" id="CHEBI:29035"/>
    </ligand>
</feature>
<gene>
    <name type="primary">sodA</name>
    <name type="ordered locus">Z5453</name>
    <name type="ordered locus">ECs4834</name>
</gene>
<name>SODM_ECO57</name>
<reference key="1">
    <citation type="journal article" date="2001" name="Nature">
        <title>Genome sequence of enterohaemorrhagic Escherichia coli O157:H7.</title>
        <authorList>
            <person name="Perna N.T."/>
            <person name="Plunkett G. III"/>
            <person name="Burland V."/>
            <person name="Mau B."/>
            <person name="Glasner J.D."/>
            <person name="Rose D.J."/>
            <person name="Mayhew G.F."/>
            <person name="Evans P.S."/>
            <person name="Gregor J."/>
            <person name="Kirkpatrick H.A."/>
            <person name="Posfai G."/>
            <person name="Hackett J."/>
            <person name="Klink S."/>
            <person name="Boutin A."/>
            <person name="Shao Y."/>
            <person name="Miller L."/>
            <person name="Grotbeck E.J."/>
            <person name="Davis N.W."/>
            <person name="Lim A."/>
            <person name="Dimalanta E.T."/>
            <person name="Potamousis K."/>
            <person name="Apodaca J."/>
            <person name="Anantharaman T.S."/>
            <person name="Lin J."/>
            <person name="Yen G."/>
            <person name="Schwartz D.C."/>
            <person name="Welch R.A."/>
            <person name="Blattner F.R."/>
        </authorList>
    </citation>
    <scope>NUCLEOTIDE SEQUENCE [LARGE SCALE GENOMIC DNA]</scope>
    <source>
        <strain>O157:H7 / EDL933 / ATCC 700927 / EHEC</strain>
    </source>
</reference>
<reference key="2">
    <citation type="journal article" date="2001" name="DNA Res.">
        <title>Complete genome sequence of enterohemorrhagic Escherichia coli O157:H7 and genomic comparison with a laboratory strain K-12.</title>
        <authorList>
            <person name="Hayashi T."/>
            <person name="Makino K."/>
            <person name="Ohnishi M."/>
            <person name="Kurokawa K."/>
            <person name="Ishii K."/>
            <person name="Yokoyama K."/>
            <person name="Han C.-G."/>
            <person name="Ohtsubo E."/>
            <person name="Nakayama K."/>
            <person name="Murata T."/>
            <person name="Tanaka M."/>
            <person name="Tobe T."/>
            <person name="Iida T."/>
            <person name="Takami H."/>
            <person name="Honda T."/>
            <person name="Sasakawa C."/>
            <person name="Ogasawara N."/>
            <person name="Yasunaga T."/>
            <person name="Kuhara S."/>
            <person name="Shiba T."/>
            <person name="Hattori M."/>
            <person name="Shinagawa H."/>
        </authorList>
    </citation>
    <scope>NUCLEOTIDE SEQUENCE [LARGE SCALE GENOMIC DNA]</scope>
    <source>
        <strain>O157:H7 / Sakai / RIMD 0509952 / EHEC</strain>
    </source>
</reference>
<sequence>MSYTLPSLPYAYDALEPHFDKQTMEIHHTKHHQTYVNNANAALESLPEFANLPVEELITKLDQLPADKKTVLRNNAGGHANHSLFWKGLKKGTTLQGDLKAAIERDFGSVDNFKAEFEKAAASRFGSGWAWLVLKGDKLAVVSTANQDSPLMGEAISGASGFPILGLDVWEHAYYLKFQNRRPDYIKEFWNVVNWDEAAARFAAKK</sequence>
<accession>P66828</accession>
<accession>Q8X7B2</accession>